<sequence>MIDRKLLLQDFDKVAHSLKKRNSVIDDGLERLREIITHYKKQLIELESLQAFQNKVSKEFGIKMTQKVDASDLKKELENNKIKLNELSKSVSELEQKIDLKLSIIPNLVDEKTPLGTSEEDNIEIKKILTPRDFTFTPKEHFELAQKNGWIDFESGVKLAKSRFSVIRGFGAKVYRALIHLMLDFNEKNGFEIIYTPALVNEKMLFGTGQLPKFKEDVFKIENENLYLIPTAEVTLTNLYNDTIISVEKLPIKMTAHTPCFRSEAGSAGKDTRGMIRQHQFDKVELVAITHPKESDVMQEYMLESASGILKALELPHRFVQLCSGDLGFSASNTIDIEVWLPGQNCYREISSVSNTRDFQARRAKIRFKENQKNQLVHTLNGSSLAVGRTMVALMENHQQADGSIHIPKALEKYL</sequence>
<name>SYS_HELAH</name>
<reference key="1">
    <citation type="journal article" date="2006" name="PLoS Genet.">
        <title>Who ate whom? Adaptive Helicobacter genomic changes that accompanied a host jump from early humans to large felines.</title>
        <authorList>
            <person name="Eppinger M."/>
            <person name="Baar C."/>
            <person name="Linz B."/>
            <person name="Raddatz G."/>
            <person name="Lanz C."/>
            <person name="Keller H."/>
            <person name="Morelli G."/>
            <person name="Gressmann H."/>
            <person name="Achtman M."/>
            <person name="Schuster S.C."/>
        </authorList>
    </citation>
    <scope>NUCLEOTIDE SEQUENCE [LARGE SCALE GENOMIC DNA]</scope>
    <source>
        <strain>Sheeba</strain>
    </source>
</reference>
<organism>
    <name type="scientific">Helicobacter acinonychis (strain Sheeba)</name>
    <dbReference type="NCBI Taxonomy" id="382638"/>
    <lineage>
        <taxon>Bacteria</taxon>
        <taxon>Pseudomonadati</taxon>
        <taxon>Campylobacterota</taxon>
        <taxon>Epsilonproteobacteria</taxon>
        <taxon>Campylobacterales</taxon>
        <taxon>Helicobacteraceae</taxon>
        <taxon>Helicobacter</taxon>
    </lineage>
</organism>
<gene>
    <name evidence="1" type="primary">serS</name>
    <name type="ordered locus">Hac_1740</name>
</gene>
<protein>
    <recommendedName>
        <fullName evidence="1">Serine--tRNA ligase</fullName>
        <ecNumber evidence="1">6.1.1.11</ecNumber>
    </recommendedName>
    <alternativeName>
        <fullName evidence="1">Seryl-tRNA synthetase</fullName>
        <shortName evidence="1">SerRS</shortName>
    </alternativeName>
    <alternativeName>
        <fullName evidence="1">Seryl-tRNA(Ser/Sec) synthetase</fullName>
    </alternativeName>
</protein>
<proteinExistence type="inferred from homology"/>
<feature type="chain" id="PRO_1000019697" description="Serine--tRNA ligase">
    <location>
        <begin position="1"/>
        <end position="415"/>
    </location>
</feature>
<feature type="binding site" evidence="1">
    <location>
        <begin position="231"/>
        <end position="233"/>
    </location>
    <ligand>
        <name>L-serine</name>
        <dbReference type="ChEBI" id="CHEBI:33384"/>
    </ligand>
</feature>
<feature type="binding site" evidence="1">
    <location>
        <begin position="262"/>
        <end position="264"/>
    </location>
    <ligand>
        <name>ATP</name>
        <dbReference type="ChEBI" id="CHEBI:30616"/>
    </ligand>
</feature>
<feature type="binding site" evidence="1">
    <location>
        <position position="285"/>
    </location>
    <ligand>
        <name>L-serine</name>
        <dbReference type="ChEBI" id="CHEBI:33384"/>
    </ligand>
</feature>
<feature type="binding site" evidence="1">
    <location>
        <begin position="349"/>
        <end position="352"/>
    </location>
    <ligand>
        <name>ATP</name>
        <dbReference type="ChEBI" id="CHEBI:30616"/>
    </ligand>
</feature>
<feature type="binding site" evidence="1">
    <location>
        <position position="383"/>
    </location>
    <ligand>
        <name>L-serine</name>
        <dbReference type="ChEBI" id="CHEBI:33384"/>
    </ligand>
</feature>
<accession>Q17V90</accession>
<evidence type="ECO:0000255" key="1">
    <source>
        <dbReference type="HAMAP-Rule" id="MF_00176"/>
    </source>
</evidence>
<keyword id="KW-0030">Aminoacyl-tRNA synthetase</keyword>
<keyword id="KW-0067">ATP-binding</keyword>
<keyword id="KW-0963">Cytoplasm</keyword>
<keyword id="KW-0436">Ligase</keyword>
<keyword id="KW-0547">Nucleotide-binding</keyword>
<keyword id="KW-0648">Protein biosynthesis</keyword>
<comment type="function">
    <text evidence="1">Catalyzes the attachment of serine to tRNA(Ser). Is also able to aminoacylate tRNA(Sec) with serine, to form the misacylated tRNA L-seryl-tRNA(Sec), which will be further converted into selenocysteinyl-tRNA(Sec).</text>
</comment>
<comment type="catalytic activity">
    <reaction evidence="1">
        <text>tRNA(Ser) + L-serine + ATP = L-seryl-tRNA(Ser) + AMP + diphosphate + H(+)</text>
        <dbReference type="Rhea" id="RHEA:12292"/>
        <dbReference type="Rhea" id="RHEA-COMP:9669"/>
        <dbReference type="Rhea" id="RHEA-COMP:9703"/>
        <dbReference type="ChEBI" id="CHEBI:15378"/>
        <dbReference type="ChEBI" id="CHEBI:30616"/>
        <dbReference type="ChEBI" id="CHEBI:33019"/>
        <dbReference type="ChEBI" id="CHEBI:33384"/>
        <dbReference type="ChEBI" id="CHEBI:78442"/>
        <dbReference type="ChEBI" id="CHEBI:78533"/>
        <dbReference type="ChEBI" id="CHEBI:456215"/>
        <dbReference type="EC" id="6.1.1.11"/>
    </reaction>
</comment>
<comment type="catalytic activity">
    <reaction evidence="1">
        <text>tRNA(Sec) + L-serine + ATP = L-seryl-tRNA(Sec) + AMP + diphosphate + H(+)</text>
        <dbReference type="Rhea" id="RHEA:42580"/>
        <dbReference type="Rhea" id="RHEA-COMP:9742"/>
        <dbReference type="Rhea" id="RHEA-COMP:10128"/>
        <dbReference type="ChEBI" id="CHEBI:15378"/>
        <dbReference type="ChEBI" id="CHEBI:30616"/>
        <dbReference type="ChEBI" id="CHEBI:33019"/>
        <dbReference type="ChEBI" id="CHEBI:33384"/>
        <dbReference type="ChEBI" id="CHEBI:78442"/>
        <dbReference type="ChEBI" id="CHEBI:78533"/>
        <dbReference type="ChEBI" id="CHEBI:456215"/>
        <dbReference type="EC" id="6.1.1.11"/>
    </reaction>
</comment>
<comment type="pathway">
    <text evidence="1">Aminoacyl-tRNA biosynthesis; selenocysteinyl-tRNA(Sec) biosynthesis; L-seryl-tRNA(Sec) from L-serine and tRNA(Sec): step 1/1.</text>
</comment>
<comment type="subunit">
    <text evidence="1">Homodimer. The tRNA molecule binds across the dimer.</text>
</comment>
<comment type="subcellular location">
    <subcellularLocation>
        <location evidence="1">Cytoplasm</location>
    </subcellularLocation>
</comment>
<comment type="domain">
    <text evidence="1">Consists of two distinct domains, a catalytic core and a N-terminal extension that is involved in tRNA binding.</text>
</comment>
<comment type="similarity">
    <text evidence="1">Belongs to the class-II aminoacyl-tRNA synthetase family. Type-1 seryl-tRNA synthetase subfamily.</text>
</comment>
<dbReference type="EC" id="6.1.1.11" evidence="1"/>
<dbReference type="EMBL" id="AM260522">
    <property type="protein sequence ID" value="CAK00436.1"/>
    <property type="molecule type" value="Genomic_DNA"/>
</dbReference>
<dbReference type="RefSeq" id="WP_011578518.1">
    <property type="nucleotide sequence ID" value="NC_008229.1"/>
</dbReference>
<dbReference type="SMR" id="Q17V90"/>
<dbReference type="STRING" id="382638.Hac_1740"/>
<dbReference type="GeneID" id="31758975"/>
<dbReference type="KEGG" id="hac:Hac_1740"/>
<dbReference type="eggNOG" id="COG0172">
    <property type="taxonomic scope" value="Bacteria"/>
</dbReference>
<dbReference type="HOGENOM" id="CLU_023797_1_1_7"/>
<dbReference type="OrthoDB" id="9804647at2"/>
<dbReference type="BioCyc" id="HACI382638:HAC_RS07390-MONOMER"/>
<dbReference type="UniPathway" id="UPA00906">
    <property type="reaction ID" value="UER00895"/>
</dbReference>
<dbReference type="Proteomes" id="UP000000775">
    <property type="component" value="Chromosome"/>
</dbReference>
<dbReference type="GO" id="GO:0005737">
    <property type="term" value="C:cytoplasm"/>
    <property type="evidence" value="ECO:0007669"/>
    <property type="project" value="UniProtKB-SubCell"/>
</dbReference>
<dbReference type="GO" id="GO:0005524">
    <property type="term" value="F:ATP binding"/>
    <property type="evidence" value="ECO:0007669"/>
    <property type="project" value="UniProtKB-UniRule"/>
</dbReference>
<dbReference type="GO" id="GO:0004828">
    <property type="term" value="F:serine-tRNA ligase activity"/>
    <property type="evidence" value="ECO:0007669"/>
    <property type="project" value="UniProtKB-UniRule"/>
</dbReference>
<dbReference type="GO" id="GO:0016260">
    <property type="term" value="P:selenocysteine biosynthetic process"/>
    <property type="evidence" value="ECO:0007669"/>
    <property type="project" value="UniProtKB-UniRule"/>
</dbReference>
<dbReference type="GO" id="GO:0006434">
    <property type="term" value="P:seryl-tRNA aminoacylation"/>
    <property type="evidence" value="ECO:0007669"/>
    <property type="project" value="UniProtKB-UniRule"/>
</dbReference>
<dbReference type="CDD" id="cd00770">
    <property type="entry name" value="SerRS_core"/>
    <property type="match status" value="1"/>
</dbReference>
<dbReference type="Gene3D" id="3.30.930.10">
    <property type="entry name" value="Bira Bifunctional Protein, Domain 2"/>
    <property type="match status" value="1"/>
</dbReference>
<dbReference type="Gene3D" id="1.10.287.40">
    <property type="entry name" value="Serine-tRNA synthetase, tRNA binding domain"/>
    <property type="match status" value="1"/>
</dbReference>
<dbReference type="HAMAP" id="MF_00176">
    <property type="entry name" value="Ser_tRNA_synth_type1"/>
    <property type="match status" value="1"/>
</dbReference>
<dbReference type="InterPro" id="IPR002314">
    <property type="entry name" value="aa-tRNA-synt_IIb"/>
</dbReference>
<dbReference type="InterPro" id="IPR006195">
    <property type="entry name" value="aa-tRNA-synth_II"/>
</dbReference>
<dbReference type="InterPro" id="IPR045864">
    <property type="entry name" value="aa-tRNA-synth_II/BPL/LPL"/>
</dbReference>
<dbReference type="InterPro" id="IPR002317">
    <property type="entry name" value="Ser-tRNA-ligase_type_1"/>
</dbReference>
<dbReference type="InterPro" id="IPR015866">
    <property type="entry name" value="Ser-tRNA-synth_1_N"/>
</dbReference>
<dbReference type="InterPro" id="IPR042103">
    <property type="entry name" value="SerRS_1_N_sf"/>
</dbReference>
<dbReference type="InterPro" id="IPR033729">
    <property type="entry name" value="SerRS_core"/>
</dbReference>
<dbReference type="InterPro" id="IPR010978">
    <property type="entry name" value="tRNA-bd_arm"/>
</dbReference>
<dbReference type="NCBIfam" id="TIGR00414">
    <property type="entry name" value="serS"/>
    <property type="match status" value="1"/>
</dbReference>
<dbReference type="PANTHER" id="PTHR43697:SF1">
    <property type="entry name" value="SERINE--TRNA LIGASE"/>
    <property type="match status" value="1"/>
</dbReference>
<dbReference type="PANTHER" id="PTHR43697">
    <property type="entry name" value="SERYL-TRNA SYNTHETASE"/>
    <property type="match status" value="1"/>
</dbReference>
<dbReference type="Pfam" id="PF02403">
    <property type="entry name" value="Seryl_tRNA_N"/>
    <property type="match status" value="1"/>
</dbReference>
<dbReference type="Pfam" id="PF00587">
    <property type="entry name" value="tRNA-synt_2b"/>
    <property type="match status" value="1"/>
</dbReference>
<dbReference type="PIRSF" id="PIRSF001529">
    <property type="entry name" value="Ser-tRNA-synth_IIa"/>
    <property type="match status" value="1"/>
</dbReference>
<dbReference type="PRINTS" id="PR00981">
    <property type="entry name" value="TRNASYNTHSER"/>
</dbReference>
<dbReference type="SUPFAM" id="SSF55681">
    <property type="entry name" value="Class II aaRS and biotin synthetases"/>
    <property type="match status" value="1"/>
</dbReference>
<dbReference type="SUPFAM" id="SSF46589">
    <property type="entry name" value="tRNA-binding arm"/>
    <property type="match status" value="1"/>
</dbReference>
<dbReference type="PROSITE" id="PS50862">
    <property type="entry name" value="AA_TRNA_LIGASE_II"/>
    <property type="match status" value="1"/>
</dbReference>